<feature type="chain" id="PRO_1000059813" description="ATP-dependent 6-phosphofructokinase">
    <location>
        <begin position="1"/>
        <end position="327"/>
    </location>
</feature>
<feature type="active site" description="Proton acceptor" evidence="1">
    <location>
        <position position="129"/>
    </location>
</feature>
<feature type="binding site" evidence="1">
    <location>
        <position position="12"/>
    </location>
    <ligand>
        <name>ATP</name>
        <dbReference type="ChEBI" id="CHEBI:30616"/>
    </ligand>
</feature>
<feature type="binding site" evidence="1">
    <location>
        <begin position="22"/>
        <end position="26"/>
    </location>
    <ligand>
        <name>ADP</name>
        <dbReference type="ChEBI" id="CHEBI:456216"/>
        <note>allosteric activator; ligand shared between dimeric partners</note>
    </ligand>
</feature>
<feature type="binding site" evidence="1">
    <location>
        <begin position="55"/>
        <end position="60"/>
    </location>
    <ligand>
        <name>ADP</name>
        <dbReference type="ChEBI" id="CHEBI:456216"/>
        <note>allosteric activator; ligand shared between dimeric partners</note>
    </ligand>
</feature>
<feature type="binding site" evidence="1">
    <location>
        <begin position="73"/>
        <end position="74"/>
    </location>
    <ligand>
        <name>ATP</name>
        <dbReference type="ChEBI" id="CHEBI:30616"/>
    </ligand>
</feature>
<feature type="binding site" evidence="1">
    <location>
        <begin position="103"/>
        <end position="106"/>
    </location>
    <ligand>
        <name>ATP</name>
        <dbReference type="ChEBI" id="CHEBI:30616"/>
    </ligand>
</feature>
<feature type="binding site" evidence="1">
    <location>
        <position position="104"/>
    </location>
    <ligand>
        <name>Mg(2+)</name>
        <dbReference type="ChEBI" id="CHEBI:18420"/>
        <note>catalytic</note>
    </ligand>
</feature>
<feature type="binding site" description="in other chain" evidence="1">
    <location>
        <begin position="127"/>
        <end position="129"/>
    </location>
    <ligand>
        <name>substrate</name>
        <note>ligand shared between dimeric partners</note>
    </ligand>
</feature>
<feature type="binding site" description="in other chain" evidence="1">
    <location>
        <position position="156"/>
    </location>
    <ligand>
        <name>ADP</name>
        <dbReference type="ChEBI" id="CHEBI:456216"/>
        <note>allosteric activator; ligand shared between dimeric partners</note>
    </ligand>
</feature>
<feature type="binding site" evidence="1">
    <location>
        <position position="164"/>
    </location>
    <ligand>
        <name>substrate</name>
        <note>ligand shared between dimeric partners</note>
    </ligand>
</feature>
<feature type="binding site" description="in other chain" evidence="1">
    <location>
        <begin position="171"/>
        <end position="173"/>
    </location>
    <ligand>
        <name>substrate</name>
        <note>ligand shared between dimeric partners</note>
    </ligand>
</feature>
<feature type="binding site" description="in other chain" evidence="1">
    <location>
        <begin position="187"/>
        <end position="189"/>
    </location>
    <ligand>
        <name>ADP</name>
        <dbReference type="ChEBI" id="CHEBI:456216"/>
        <note>allosteric activator; ligand shared between dimeric partners</note>
    </ligand>
</feature>
<feature type="binding site" description="in other chain" evidence="1">
    <location>
        <position position="213"/>
    </location>
    <ligand>
        <name>ADP</name>
        <dbReference type="ChEBI" id="CHEBI:456216"/>
        <note>allosteric activator; ligand shared between dimeric partners</note>
    </ligand>
</feature>
<feature type="binding site" description="in other chain" evidence="1">
    <location>
        <begin position="215"/>
        <end position="217"/>
    </location>
    <ligand>
        <name>ADP</name>
        <dbReference type="ChEBI" id="CHEBI:456216"/>
        <note>allosteric activator; ligand shared between dimeric partners</note>
    </ligand>
</feature>
<feature type="binding site" description="in other chain" evidence="1">
    <location>
        <position position="224"/>
    </location>
    <ligand>
        <name>substrate</name>
        <note>ligand shared between dimeric partners</note>
    </ligand>
</feature>
<feature type="binding site" evidence="1">
    <location>
        <position position="245"/>
    </location>
    <ligand>
        <name>substrate</name>
        <note>ligand shared between dimeric partners</note>
    </ligand>
</feature>
<feature type="binding site" description="in other chain" evidence="1">
    <location>
        <begin position="251"/>
        <end position="254"/>
    </location>
    <ligand>
        <name>substrate</name>
        <note>ligand shared between dimeric partners</note>
    </ligand>
</feature>
<accession>Q1CD33</accession>
<accession>D1Q2D0</accession>
<keyword id="KW-0021">Allosteric enzyme</keyword>
<keyword id="KW-0067">ATP-binding</keyword>
<keyword id="KW-0963">Cytoplasm</keyword>
<keyword id="KW-0324">Glycolysis</keyword>
<keyword id="KW-0418">Kinase</keyword>
<keyword id="KW-0460">Magnesium</keyword>
<keyword id="KW-0479">Metal-binding</keyword>
<keyword id="KW-0547">Nucleotide-binding</keyword>
<keyword id="KW-0808">Transferase</keyword>
<reference key="1">
    <citation type="journal article" date="2006" name="J. Bacteriol.">
        <title>Complete genome sequence of Yersinia pestis strains Antiqua and Nepal516: evidence of gene reduction in an emerging pathogen.</title>
        <authorList>
            <person name="Chain P.S.G."/>
            <person name="Hu P."/>
            <person name="Malfatti S.A."/>
            <person name="Radnedge L."/>
            <person name="Larimer F."/>
            <person name="Vergez L.M."/>
            <person name="Worsham P."/>
            <person name="Chu M.C."/>
            <person name="Andersen G.L."/>
        </authorList>
    </citation>
    <scope>NUCLEOTIDE SEQUENCE [LARGE SCALE GENOMIC DNA]</scope>
    <source>
        <strain>Nepal516</strain>
    </source>
</reference>
<reference key="2">
    <citation type="submission" date="2009-04" db="EMBL/GenBank/DDBJ databases">
        <title>Yersinia pestis Nepal516A whole genome shotgun sequencing project.</title>
        <authorList>
            <person name="Plunkett G. III"/>
            <person name="Anderson B.D."/>
            <person name="Baumler D.J."/>
            <person name="Burland V."/>
            <person name="Cabot E.L."/>
            <person name="Glasner J.D."/>
            <person name="Mau B."/>
            <person name="Neeno-Eckwall E."/>
            <person name="Perna N.T."/>
            <person name="Munk A.C."/>
            <person name="Tapia R."/>
            <person name="Green L.D."/>
            <person name="Rogers Y.C."/>
            <person name="Detter J.C."/>
            <person name="Bruce D.C."/>
            <person name="Brettin T.S."/>
        </authorList>
    </citation>
    <scope>NUCLEOTIDE SEQUENCE [LARGE SCALE GENOMIC DNA]</scope>
    <source>
        <strain>Nepal516</strain>
    </source>
</reference>
<sequence>MVKKIGVLTSGGDAPGMNAAIRGVVRAALSAGLDVFGIEDGYLGLYENRMKKLDRYSVSDMINRGGTFLGSARFPEFRDPEVRKVALKNMHERGIDGLVVIGGDGSYAGADLLTKEGGIHCVGLPGTIDNDVAGTDYTIGFFTALETVVEAIDRLRDTSSSHQRISIVEVMGRYCGDLTLAAAIAGGCEFIAIPEVEFKRDDLVAEIKAGIAKGKKHAIVAITEKLDDIDSLAKYIEKETGRETRGTVLGHIQRGGAPVAYDRILASRMGAYAVDLLLQDHDYKKGGFCVGVQNEKMVHELISVCIAPENKKSKFKEDWYDTAKKLF</sequence>
<gene>
    <name evidence="1" type="primary">pfkA</name>
    <name type="ordered locus">YPN_3770</name>
    <name type="ORF">YP516_4290</name>
</gene>
<organism>
    <name type="scientific">Yersinia pestis bv. Antiqua (strain Nepal516)</name>
    <dbReference type="NCBI Taxonomy" id="377628"/>
    <lineage>
        <taxon>Bacteria</taxon>
        <taxon>Pseudomonadati</taxon>
        <taxon>Pseudomonadota</taxon>
        <taxon>Gammaproteobacteria</taxon>
        <taxon>Enterobacterales</taxon>
        <taxon>Yersiniaceae</taxon>
        <taxon>Yersinia</taxon>
    </lineage>
</organism>
<evidence type="ECO:0000255" key="1">
    <source>
        <dbReference type="HAMAP-Rule" id="MF_00339"/>
    </source>
</evidence>
<proteinExistence type="inferred from homology"/>
<name>PFKA_YERPN</name>
<dbReference type="EC" id="2.7.1.11" evidence="1"/>
<dbReference type="EMBL" id="CP000305">
    <property type="protein sequence ID" value="ABG20097.1"/>
    <property type="molecule type" value="Genomic_DNA"/>
</dbReference>
<dbReference type="EMBL" id="ACNQ01000019">
    <property type="protein sequence ID" value="EEO74683.1"/>
    <property type="molecule type" value="Genomic_DNA"/>
</dbReference>
<dbReference type="RefSeq" id="WP_002208966.1">
    <property type="nucleotide sequence ID" value="NZ_ACNQ01000019.1"/>
</dbReference>
<dbReference type="SMR" id="Q1CD33"/>
<dbReference type="GeneID" id="57974514"/>
<dbReference type="KEGG" id="ypn:YPN_3770"/>
<dbReference type="HOGENOM" id="CLU_020655_0_1_6"/>
<dbReference type="UniPathway" id="UPA00109">
    <property type="reaction ID" value="UER00182"/>
</dbReference>
<dbReference type="Proteomes" id="UP000008936">
    <property type="component" value="Chromosome"/>
</dbReference>
<dbReference type="GO" id="GO:0005945">
    <property type="term" value="C:6-phosphofructokinase complex"/>
    <property type="evidence" value="ECO:0007669"/>
    <property type="project" value="TreeGrafter"/>
</dbReference>
<dbReference type="GO" id="GO:0003872">
    <property type="term" value="F:6-phosphofructokinase activity"/>
    <property type="evidence" value="ECO:0007669"/>
    <property type="project" value="UniProtKB-UniRule"/>
</dbReference>
<dbReference type="GO" id="GO:0016208">
    <property type="term" value="F:AMP binding"/>
    <property type="evidence" value="ECO:0007669"/>
    <property type="project" value="TreeGrafter"/>
</dbReference>
<dbReference type="GO" id="GO:0005524">
    <property type="term" value="F:ATP binding"/>
    <property type="evidence" value="ECO:0007669"/>
    <property type="project" value="UniProtKB-KW"/>
</dbReference>
<dbReference type="GO" id="GO:0070095">
    <property type="term" value="F:fructose-6-phosphate binding"/>
    <property type="evidence" value="ECO:0007669"/>
    <property type="project" value="TreeGrafter"/>
</dbReference>
<dbReference type="GO" id="GO:0042802">
    <property type="term" value="F:identical protein binding"/>
    <property type="evidence" value="ECO:0007669"/>
    <property type="project" value="TreeGrafter"/>
</dbReference>
<dbReference type="GO" id="GO:0046872">
    <property type="term" value="F:metal ion binding"/>
    <property type="evidence" value="ECO:0007669"/>
    <property type="project" value="UniProtKB-KW"/>
</dbReference>
<dbReference type="GO" id="GO:0048029">
    <property type="term" value="F:monosaccharide binding"/>
    <property type="evidence" value="ECO:0007669"/>
    <property type="project" value="TreeGrafter"/>
</dbReference>
<dbReference type="GO" id="GO:0061621">
    <property type="term" value="P:canonical glycolysis"/>
    <property type="evidence" value="ECO:0007669"/>
    <property type="project" value="TreeGrafter"/>
</dbReference>
<dbReference type="GO" id="GO:0030388">
    <property type="term" value="P:fructose 1,6-bisphosphate metabolic process"/>
    <property type="evidence" value="ECO:0007669"/>
    <property type="project" value="TreeGrafter"/>
</dbReference>
<dbReference type="GO" id="GO:0006002">
    <property type="term" value="P:fructose 6-phosphate metabolic process"/>
    <property type="evidence" value="ECO:0007669"/>
    <property type="project" value="InterPro"/>
</dbReference>
<dbReference type="FunFam" id="3.40.50.450:FF:000001">
    <property type="entry name" value="ATP-dependent 6-phosphofructokinase"/>
    <property type="match status" value="1"/>
</dbReference>
<dbReference type="FunFam" id="3.40.50.460:FF:000002">
    <property type="entry name" value="ATP-dependent 6-phosphofructokinase"/>
    <property type="match status" value="1"/>
</dbReference>
<dbReference type="Gene3D" id="3.40.50.450">
    <property type="match status" value="1"/>
</dbReference>
<dbReference type="Gene3D" id="3.40.50.460">
    <property type="entry name" value="Phosphofructokinase domain"/>
    <property type="match status" value="1"/>
</dbReference>
<dbReference type="HAMAP" id="MF_00339">
    <property type="entry name" value="Phosphofructokinase_I_B1"/>
    <property type="match status" value="1"/>
</dbReference>
<dbReference type="InterPro" id="IPR022953">
    <property type="entry name" value="ATP_PFK"/>
</dbReference>
<dbReference type="InterPro" id="IPR012003">
    <property type="entry name" value="ATP_PFK_prok-type"/>
</dbReference>
<dbReference type="InterPro" id="IPR012828">
    <property type="entry name" value="PFKA_ATP_prok"/>
</dbReference>
<dbReference type="InterPro" id="IPR015912">
    <property type="entry name" value="Phosphofructokinase_CS"/>
</dbReference>
<dbReference type="InterPro" id="IPR000023">
    <property type="entry name" value="Phosphofructokinase_dom"/>
</dbReference>
<dbReference type="InterPro" id="IPR035966">
    <property type="entry name" value="PKF_sf"/>
</dbReference>
<dbReference type="NCBIfam" id="TIGR02482">
    <property type="entry name" value="PFKA_ATP"/>
    <property type="match status" value="1"/>
</dbReference>
<dbReference type="NCBIfam" id="NF002872">
    <property type="entry name" value="PRK03202.1"/>
    <property type="match status" value="1"/>
</dbReference>
<dbReference type="PANTHER" id="PTHR13697:SF4">
    <property type="entry name" value="ATP-DEPENDENT 6-PHOSPHOFRUCTOKINASE"/>
    <property type="match status" value="1"/>
</dbReference>
<dbReference type="PANTHER" id="PTHR13697">
    <property type="entry name" value="PHOSPHOFRUCTOKINASE"/>
    <property type="match status" value="1"/>
</dbReference>
<dbReference type="Pfam" id="PF00365">
    <property type="entry name" value="PFK"/>
    <property type="match status" value="1"/>
</dbReference>
<dbReference type="PIRSF" id="PIRSF000532">
    <property type="entry name" value="ATP_PFK_prok"/>
    <property type="match status" value="1"/>
</dbReference>
<dbReference type="PRINTS" id="PR00476">
    <property type="entry name" value="PHFRCTKINASE"/>
</dbReference>
<dbReference type="SUPFAM" id="SSF53784">
    <property type="entry name" value="Phosphofructokinase"/>
    <property type="match status" value="1"/>
</dbReference>
<dbReference type="PROSITE" id="PS00433">
    <property type="entry name" value="PHOSPHOFRUCTOKINASE"/>
    <property type="match status" value="1"/>
</dbReference>
<protein>
    <recommendedName>
        <fullName evidence="1">ATP-dependent 6-phosphofructokinase</fullName>
        <shortName evidence="1">ATP-PFK</shortName>
        <shortName evidence="1">Phosphofructokinase</shortName>
        <ecNumber evidence="1">2.7.1.11</ecNumber>
    </recommendedName>
    <alternativeName>
        <fullName evidence="1">Phosphohexokinase</fullName>
    </alternativeName>
</protein>
<comment type="function">
    <text evidence="1">Catalyzes the phosphorylation of D-fructose 6-phosphate to fructose 1,6-bisphosphate by ATP, the first committing step of glycolysis.</text>
</comment>
<comment type="catalytic activity">
    <reaction evidence="1">
        <text>beta-D-fructose 6-phosphate + ATP = beta-D-fructose 1,6-bisphosphate + ADP + H(+)</text>
        <dbReference type="Rhea" id="RHEA:16109"/>
        <dbReference type="ChEBI" id="CHEBI:15378"/>
        <dbReference type="ChEBI" id="CHEBI:30616"/>
        <dbReference type="ChEBI" id="CHEBI:32966"/>
        <dbReference type="ChEBI" id="CHEBI:57634"/>
        <dbReference type="ChEBI" id="CHEBI:456216"/>
        <dbReference type="EC" id="2.7.1.11"/>
    </reaction>
</comment>
<comment type="cofactor">
    <cofactor evidence="1">
        <name>Mg(2+)</name>
        <dbReference type="ChEBI" id="CHEBI:18420"/>
    </cofactor>
</comment>
<comment type="activity regulation">
    <text evidence="1">Allosterically activated by ADP and other diphosphonucleosides, and allosterically inhibited by phosphoenolpyruvate.</text>
</comment>
<comment type="pathway">
    <text evidence="1">Carbohydrate degradation; glycolysis; D-glyceraldehyde 3-phosphate and glycerone phosphate from D-glucose: step 3/4.</text>
</comment>
<comment type="subunit">
    <text evidence="1">Homotetramer.</text>
</comment>
<comment type="subcellular location">
    <subcellularLocation>
        <location evidence="1">Cytoplasm</location>
    </subcellularLocation>
</comment>
<comment type="similarity">
    <text evidence="1">Belongs to the phosphofructokinase type A (PFKA) family. ATP-dependent PFK group I subfamily. Prokaryotic clade 'B1' sub-subfamily.</text>
</comment>